<keyword id="KW-0007">Acetylation</keyword>
<keyword id="KW-0175">Coiled coil</keyword>
<keyword id="KW-0967">Endosome</keyword>
<keyword id="KW-0597">Phosphoprotein</keyword>
<keyword id="KW-1185">Reference proteome</keyword>
<evidence type="ECO:0000250" key="1">
    <source>
        <dbReference type="UniProtKB" id="O60347"/>
    </source>
</evidence>
<evidence type="ECO:0000250" key="2">
    <source>
        <dbReference type="UniProtKB" id="Q6A039"/>
    </source>
</evidence>
<evidence type="ECO:0000255" key="3">
    <source>
        <dbReference type="PROSITE-ProRule" id="PRU00163"/>
    </source>
</evidence>
<evidence type="ECO:0000256" key="4">
    <source>
        <dbReference type="SAM" id="MobiDB-lite"/>
    </source>
</evidence>
<evidence type="ECO:0000269" key="5">
    <source>
    </source>
</evidence>
<accession>M0R7T9</accession>
<name>TBC12_RAT</name>
<sequence>MMGPEDAGACSGRNAELLPVPGPMGQDGKTVPATGGFSGGAVAAEPPGEAGEEEAPPPRQLLQRYLAAAAGPLQPGLGGVEAEAAAVPAARGSGMTNGDSGFLLLQDRRGPEEARRRRTCGRPCLAEPADEGVDGAGGLDDWAAPLEDPLRSCCLAAGDTDDPDPTATTSAGRDVGSAESSLGLPDARFGSRNTFEVSRRQSAGDLLPSAGQSAPLPAAEQGPGGTTVRARRSGGFADFFARNLFPKRTKELKSVVHSAPGWKLFGKVPPRENLQKTSKIIQQEYEARTGRTCKVPPQSSRRKNFEFEPLSTTALILEDRPSNLPAKSVEEALRHRQEYDEMVAEAKKREIKEAHKRKRIMKERFKQEESIASAMVIWINEILPNWEVMRSTRRVRELWWQGLPPSVRGKVWSLAVGNELNITPELYEIFLSRAKERWKSFSESSSDSDMEGLSVADREASLELIKLDISRTFPSLYIFQKGGPYHDVLHSILGAYTCYRPDVGYVQGMSFIAAVLILNLEEADAFIAFANLLNRPCQLAFFRVDHSMMLKYFATFEVFFEENLSKLFLHFKSYNLTPDIYLIDWIFTLYSKSLPLDLACRVWDVFCRDGEEFLFRTGLGILRLYEDILLQMDFIHIAQFLTKLPEDITSEKLFSCIAAIQMQNSTKKWTQVFASVTKDIKEGDKNNSPALKS</sequence>
<gene>
    <name type="primary">Tbc1d12</name>
</gene>
<dbReference type="EMBL" id="AABR07006771">
    <property type="status" value="NOT_ANNOTATED_CDS"/>
    <property type="molecule type" value="Genomic_DNA"/>
</dbReference>
<dbReference type="EMBL" id="AABR07006772">
    <property type="status" value="NOT_ANNOTATED_CDS"/>
    <property type="molecule type" value="Genomic_DNA"/>
</dbReference>
<dbReference type="EMBL" id="AABR07006773">
    <property type="status" value="NOT_ANNOTATED_CDS"/>
    <property type="molecule type" value="Genomic_DNA"/>
</dbReference>
<dbReference type="EMBL" id="AABR07006774">
    <property type="status" value="NOT_ANNOTATED_CDS"/>
    <property type="molecule type" value="Genomic_DNA"/>
</dbReference>
<dbReference type="EMBL" id="AABR07006775">
    <property type="status" value="NOT_ANNOTATED_CDS"/>
    <property type="molecule type" value="Genomic_DNA"/>
</dbReference>
<dbReference type="EMBL" id="AABR07006776">
    <property type="status" value="NOT_ANNOTATED_CDS"/>
    <property type="molecule type" value="Genomic_DNA"/>
</dbReference>
<dbReference type="EMBL" id="AABR07006777">
    <property type="status" value="NOT_ANNOTATED_CDS"/>
    <property type="molecule type" value="Genomic_DNA"/>
</dbReference>
<dbReference type="EMBL" id="AABR07006778">
    <property type="status" value="NOT_ANNOTATED_CDS"/>
    <property type="molecule type" value="Genomic_DNA"/>
</dbReference>
<dbReference type="EMBL" id="AABR07072049">
    <property type="status" value="NOT_ANNOTATED_CDS"/>
    <property type="molecule type" value="Genomic_DNA"/>
</dbReference>
<dbReference type="EMBL" id="AC122568">
    <property type="status" value="NOT_ANNOTATED_CDS"/>
    <property type="molecule type" value="Genomic_DNA"/>
</dbReference>
<dbReference type="RefSeq" id="NP_001364043.1">
    <property type="nucleotide sequence ID" value="NM_001377114.1"/>
</dbReference>
<dbReference type="RefSeq" id="XP_003753443.1">
    <property type="nucleotide sequence ID" value="XM_003753395.4"/>
</dbReference>
<dbReference type="RefSeq" id="XP_008758607.1">
    <property type="nucleotide sequence ID" value="XM_008760385.2"/>
</dbReference>
<dbReference type="SMR" id="M0R7T9"/>
<dbReference type="FunCoup" id="M0R7T9">
    <property type="interactions" value="1099"/>
</dbReference>
<dbReference type="STRING" id="10116.ENSRNOP00000065523"/>
<dbReference type="PhosphoSitePlus" id="M0R7T9"/>
<dbReference type="PaxDb" id="10116-ENSRNOP00000065523"/>
<dbReference type="Ensembl" id="ENSRNOT00000078738.2">
    <property type="protein sequence ID" value="ENSRNOP00000070589.1"/>
    <property type="gene ID" value="ENSRNOG00000036598.5"/>
</dbReference>
<dbReference type="GeneID" id="685933"/>
<dbReference type="AGR" id="RGD:9377071"/>
<dbReference type="RGD" id="9377071">
    <property type="gene designation" value="Tbc1d12"/>
</dbReference>
<dbReference type="eggNOG" id="KOG2223">
    <property type="taxonomic scope" value="Eukaryota"/>
</dbReference>
<dbReference type="GeneTree" id="ENSGT00940000156410"/>
<dbReference type="InParanoid" id="M0R7T9"/>
<dbReference type="OMA" id="GQSARDH"/>
<dbReference type="OrthoDB" id="294251at2759"/>
<dbReference type="PRO" id="PR:M0R7T9"/>
<dbReference type="Proteomes" id="UP000002494">
    <property type="component" value="Chromosome 1"/>
</dbReference>
<dbReference type="Bgee" id="ENSRNOG00000036598">
    <property type="expression patterns" value="Expressed in cerebellum and 18 other cell types or tissues"/>
</dbReference>
<dbReference type="ExpressionAtlas" id="M0R7T9">
    <property type="expression patterns" value="baseline and differential"/>
</dbReference>
<dbReference type="GO" id="GO:0005776">
    <property type="term" value="C:autophagosome"/>
    <property type="evidence" value="ECO:0000318"/>
    <property type="project" value="GO_Central"/>
</dbReference>
<dbReference type="GO" id="GO:0055037">
    <property type="term" value="C:recycling endosome"/>
    <property type="evidence" value="ECO:0000318"/>
    <property type="project" value="GO_Central"/>
</dbReference>
<dbReference type="GO" id="GO:0005096">
    <property type="term" value="F:GTPase activator activity"/>
    <property type="evidence" value="ECO:0000318"/>
    <property type="project" value="GO_Central"/>
</dbReference>
<dbReference type="GO" id="GO:2000785">
    <property type="term" value="P:regulation of autophagosome assembly"/>
    <property type="evidence" value="ECO:0000318"/>
    <property type="project" value="GO_Central"/>
</dbReference>
<dbReference type="FunFam" id="1.10.8.270:FF:000008">
    <property type="entry name" value="Putative TBC1 domain family member 14"/>
    <property type="match status" value="1"/>
</dbReference>
<dbReference type="FunFam" id="1.10.10.750:FF:000005">
    <property type="entry name" value="TBC1 domain family member 14"/>
    <property type="match status" value="1"/>
</dbReference>
<dbReference type="FunFam" id="1.10.472.80:FF:000006">
    <property type="entry name" value="TBC1 domain family member 14"/>
    <property type="match status" value="1"/>
</dbReference>
<dbReference type="Gene3D" id="1.10.8.270">
    <property type="entry name" value="putative rabgap domain of human tbc1 domain family member 14 like domains"/>
    <property type="match status" value="1"/>
</dbReference>
<dbReference type="Gene3D" id="1.10.10.750">
    <property type="entry name" value="Ypt/Rab-GAP domain of gyp1p, domain 1"/>
    <property type="match status" value="1"/>
</dbReference>
<dbReference type="Gene3D" id="1.10.472.80">
    <property type="entry name" value="Ypt/Rab-GAP domain of gyp1p, domain 3"/>
    <property type="match status" value="1"/>
</dbReference>
<dbReference type="InterPro" id="IPR000195">
    <property type="entry name" value="Rab-GAP-TBC_dom"/>
</dbReference>
<dbReference type="InterPro" id="IPR035969">
    <property type="entry name" value="Rab-GAP_TBC_sf"/>
</dbReference>
<dbReference type="InterPro" id="IPR050302">
    <property type="entry name" value="Rab_GAP_TBC_domain"/>
</dbReference>
<dbReference type="PANTHER" id="PTHR47219">
    <property type="entry name" value="RAB GTPASE-ACTIVATING PROTEIN 1-LIKE"/>
    <property type="match status" value="1"/>
</dbReference>
<dbReference type="PANTHER" id="PTHR47219:SF15">
    <property type="entry name" value="TBC1 DOMAIN FAMILY MEMBER 12 ISOFORM X1"/>
    <property type="match status" value="1"/>
</dbReference>
<dbReference type="Pfam" id="PF00566">
    <property type="entry name" value="RabGAP-TBC"/>
    <property type="match status" value="1"/>
</dbReference>
<dbReference type="SMART" id="SM00164">
    <property type="entry name" value="TBC"/>
    <property type="match status" value="1"/>
</dbReference>
<dbReference type="SUPFAM" id="SSF47923">
    <property type="entry name" value="Ypt/Rab-GAP domain of gyp1p"/>
    <property type="match status" value="2"/>
</dbReference>
<dbReference type="PROSITE" id="PS50086">
    <property type="entry name" value="TBC_RABGAP"/>
    <property type="match status" value="1"/>
</dbReference>
<proteinExistence type="inferred from homology"/>
<organism>
    <name type="scientific">Rattus norvegicus</name>
    <name type="common">Rat</name>
    <dbReference type="NCBI Taxonomy" id="10116"/>
    <lineage>
        <taxon>Eukaryota</taxon>
        <taxon>Metazoa</taxon>
        <taxon>Chordata</taxon>
        <taxon>Craniata</taxon>
        <taxon>Vertebrata</taxon>
        <taxon>Euteleostomi</taxon>
        <taxon>Mammalia</taxon>
        <taxon>Eutheria</taxon>
        <taxon>Euarchontoglires</taxon>
        <taxon>Glires</taxon>
        <taxon>Rodentia</taxon>
        <taxon>Myomorpha</taxon>
        <taxon>Muroidea</taxon>
        <taxon>Muridae</taxon>
        <taxon>Murinae</taxon>
        <taxon>Rattus</taxon>
    </lineage>
</organism>
<feature type="chain" id="PRO_0000448234" description="TBC1 domain family member 12">
    <location>
        <begin position="1"/>
        <end position="693"/>
    </location>
</feature>
<feature type="domain" description="Rab-GAP TBC" evidence="3">
    <location>
        <begin position="402"/>
        <end position="610"/>
    </location>
</feature>
<feature type="region of interest" description="Disordered" evidence="4">
    <location>
        <begin position="1"/>
        <end position="57"/>
    </location>
</feature>
<feature type="region of interest" description="Disordered" evidence="4">
    <location>
        <begin position="91"/>
        <end position="120"/>
    </location>
</feature>
<feature type="region of interest" description="Disordered" evidence="4">
    <location>
        <begin position="156"/>
        <end position="229"/>
    </location>
</feature>
<feature type="compositionally biased region" description="Low complexity" evidence="4">
    <location>
        <begin position="40"/>
        <end position="49"/>
    </location>
</feature>
<feature type="compositionally biased region" description="Basic and acidic residues" evidence="4">
    <location>
        <begin position="106"/>
        <end position="115"/>
    </location>
</feature>
<feature type="modified residue" description="N-acetylmethionine" evidence="1">
    <location>
        <position position="1"/>
    </location>
</feature>
<feature type="modified residue" description="Phosphoserine" evidence="2">
    <location>
        <position position="202"/>
    </location>
</feature>
<feature type="modified residue" description="Phosphoserine" evidence="1">
    <location>
        <position position="233"/>
    </location>
</feature>
<comment type="function">
    <text evidence="5">RAB11A-binding protein that plays a role in neurite outgrowth.</text>
</comment>
<comment type="subunit">
    <text evidence="1">Interacts with RAB11A; this interaction recruits TBC1D12 to RAB11A-positive recycling endosomes.</text>
</comment>
<comment type="subcellular location">
    <subcellularLocation>
        <location evidence="1">Endosome</location>
    </subcellularLocation>
</comment>
<comment type="disruption phenotype">
    <text evidence="5">Knock-down promotes neurite outgrowth in a RAB11A-dependent manner.</text>
</comment>
<reference key="1">
    <citation type="journal article" date="2004" name="Nature">
        <title>Genome sequence of the Brown Norway rat yields insights into mammalian evolution.</title>
        <authorList>
            <person name="Gibbs R.A."/>
            <person name="Weinstock G.M."/>
            <person name="Metzker M.L."/>
            <person name="Muzny D.M."/>
            <person name="Sodergren E.J."/>
            <person name="Scherer S."/>
            <person name="Scott G."/>
            <person name="Steffen D."/>
            <person name="Worley K.C."/>
            <person name="Burch P.E."/>
            <person name="Okwuonu G."/>
            <person name="Hines S."/>
            <person name="Lewis L."/>
            <person name="Deramo C."/>
            <person name="Delgado O."/>
            <person name="Dugan-Rocha S."/>
            <person name="Miner G."/>
            <person name="Morgan M."/>
            <person name="Hawes A."/>
            <person name="Gill R."/>
            <person name="Holt R.A."/>
            <person name="Adams M.D."/>
            <person name="Amanatides P.G."/>
            <person name="Baden-Tillson H."/>
            <person name="Barnstead M."/>
            <person name="Chin S."/>
            <person name="Evans C.A."/>
            <person name="Ferriera S."/>
            <person name="Fosler C."/>
            <person name="Glodek A."/>
            <person name="Gu Z."/>
            <person name="Jennings D."/>
            <person name="Kraft C.L."/>
            <person name="Nguyen T."/>
            <person name="Pfannkoch C.M."/>
            <person name="Sitter C."/>
            <person name="Sutton G.G."/>
            <person name="Venter J.C."/>
            <person name="Woodage T."/>
            <person name="Smith D."/>
            <person name="Lee H.-M."/>
            <person name="Gustafson E."/>
            <person name="Cahill P."/>
            <person name="Kana A."/>
            <person name="Doucette-Stamm L."/>
            <person name="Weinstock K."/>
            <person name="Fechtel K."/>
            <person name="Weiss R.B."/>
            <person name="Dunn D.M."/>
            <person name="Green E.D."/>
            <person name="Blakesley R.W."/>
            <person name="Bouffard G.G."/>
            <person name="De Jong P.J."/>
            <person name="Osoegawa K."/>
            <person name="Zhu B."/>
            <person name="Marra M."/>
            <person name="Schein J."/>
            <person name="Bosdet I."/>
            <person name="Fjell C."/>
            <person name="Jones S."/>
            <person name="Krzywinski M."/>
            <person name="Mathewson C."/>
            <person name="Siddiqui A."/>
            <person name="Wye N."/>
            <person name="McPherson J."/>
            <person name="Zhao S."/>
            <person name="Fraser C.M."/>
            <person name="Shetty J."/>
            <person name="Shatsman S."/>
            <person name="Geer K."/>
            <person name="Chen Y."/>
            <person name="Abramzon S."/>
            <person name="Nierman W.C."/>
            <person name="Havlak P.H."/>
            <person name="Chen R."/>
            <person name="Durbin K.J."/>
            <person name="Egan A."/>
            <person name="Ren Y."/>
            <person name="Song X.-Z."/>
            <person name="Li B."/>
            <person name="Liu Y."/>
            <person name="Qin X."/>
            <person name="Cawley S."/>
            <person name="Cooney A.J."/>
            <person name="D'Souza L.M."/>
            <person name="Martin K."/>
            <person name="Wu J.Q."/>
            <person name="Gonzalez-Garay M.L."/>
            <person name="Jackson A.R."/>
            <person name="Kalafus K.J."/>
            <person name="McLeod M.P."/>
            <person name="Milosavljevic A."/>
            <person name="Virk D."/>
            <person name="Volkov A."/>
            <person name="Wheeler D.A."/>
            <person name="Zhang Z."/>
            <person name="Bailey J.A."/>
            <person name="Eichler E.E."/>
            <person name="Tuzun E."/>
            <person name="Birney E."/>
            <person name="Mongin E."/>
            <person name="Ureta-Vidal A."/>
            <person name="Woodwark C."/>
            <person name="Zdobnov E."/>
            <person name="Bork P."/>
            <person name="Suyama M."/>
            <person name="Torrents D."/>
            <person name="Alexandersson M."/>
            <person name="Trask B.J."/>
            <person name="Young J.M."/>
            <person name="Huang H."/>
            <person name="Wang H."/>
            <person name="Xing H."/>
            <person name="Daniels S."/>
            <person name="Gietzen D."/>
            <person name="Schmidt J."/>
            <person name="Stevens K."/>
            <person name="Vitt U."/>
            <person name="Wingrove J."/>
            <person name="Camara F."/>
            <person name="Mar Alba M."/>
            <person name="Abril J.F."/>
            <person name="Guigo R."/>
            <person name="Smit A."/>
            <person name="Dubchak I."/>
            <person name="Rubin E.M."/>
            <person name="Couronne O."/>
            <person name="Poliakov A."/>
            <person name="Huebner N."/>
            <person name="Ganten D."/>
            <person name="Goesele C."/>
            <person name="Hummel O."/>
            <person name="Kreitler T."/>
            <person name="Lee Y.-A."/>
            <person name="Monti J."/>
            <person name="Schulz H."/>
            <person name="Zimdahl H."/>
            <person name="Himmelbauer H."/>
            <person name="Lehrach H."/>
            <person name="Jacob H.J."/>
            <person name="Bromberg S."/>
            <person name="Gullings-Handley J."/>
            <person name="Jensen-Seaman M.I."/>
            <person name="Kwitek A.E."/>
            <person name="Lazar J."/>
            <person name="Pasko D."/>
            <person name="Tonellato P.J."/>
            <person name="Twigger S."/>
            <person name="Ponting C.P."/>
            <person name="Duarte J.M."/>
            <person name="Rice S."/>
            <person name="Goodstadt L."/>
            <person name="Beatson S.A."/>
            <person name="Emes R.D."/>
            <person name="Winter E.E."/>
            <person name="Webber C."/>
            <person name="Brandt P."/>
            <person name="Nyakatura G."/>
            <person name="Adetobi M."/>
            <person name="Chiaromonte F."/>
            <person name="Elnitski L."/>
            <person name="Eswara P."/>
            <person name="Hardison R.C."/>
            <person name="Hou M."/>
            <person name="Kolbe D."/>
            <person name="Makova K."/>
            <person name="Miller W."/>
            <person name="Nekrutenko A."/>
            <person name="Riemer C."/>
            <person name="Schwartz S."/>
            <person name="Taylor J."/>
            <person name="Yang S."/>
            <person name="Zhang Y."/>
            <person name="Lindpaintner K."/>
            <person name="Andrews T.D."/>
            <person name="Caccamo M."/>
            <person name="Clamp M."/>
            <person name="Clarke L."/>
            <person name="Curwen V."/>
            <person name="Durbin R.M."/>
            <person name="Eyras E."/>
            <person name="Searle S.M."/>
            <person name="Cooper G.M."/>
            <person name="Batzoglou S."/>
            <person name="Brudno M."/>
            <person name="Sidow A."/>
            <person name="Stone E.A."/>
            <person name="Payseur B.A."/>
            <person name="Bourque G."/>
            <person name="Lopez-Otin C."/>
            <person name="Puente X.S."/>
            <person name="Chakrabarti K."/>
            <person name="Chatterji S."/>
            <person name="Dewey C."/>
            <person name="Pachter L."/>
            <person name="Bray N."/>
            <person name="Yap V.B."/>
            <person name="Caspi A."/>
            <person name="Tesler G."/>
            <person name="Pevzner P.A."/>
            <person name="Haussler D."/>
            <person name="Roskin K.M."/>
            <person name="Baertsch R."/>
            <person name="Clawson H."/>
            <person name="Furey T.S."/>
            <person name="Hinrichs A.S."/>
            <person name="Karolchik D."/>
            <person name="Kent W.J."/>
            <person name="Rosenbloom K.R."/>
            <person name="Trumbower H."/>
            <person name="Weirauch M."/>
            <person name="Cooper D.N."/>
            <person name="Stenson P.D."/>
            <person name="Ma B."/>
            <person name="Brent M."/>
            <person name="Arumugam M."/>
            <person name="Shteynberg D."/>
            <person name="Copley R.R."/>
            <person name="Taylor M.S."/>
            <person name="Riethman H."/>
            <person name="Mudunuri U."/>
            <person name="Peterson J."/>
            <person name="Guyer M."/>
            <person name="Felsenfeld A."/>
            <person name="Old S."/>
            <person name="Mockrin S."/>
            <person name="Collins F.S."/>
        </authorList>
    </citation>
    <scope>NUCLEOTIDE SEQUENCE [LARGE SCALE GENOMIC DNA]</scope>
    <source>
        <strain>Brown Norway</strain>
    </source>
</reference>
<reference key="2">
    <citation type="journal article" date="2017" name="PLoS ONE">
        <title>TBC1D12 is a novel Rab11-binding protein that modulates neurite outgrowth of PC12 cells.</title>
        <authorList>
            <person name="Oguchi M.E."/>
            <person name="Noguchi K."/>
            <person name="Fukuda M."/>
        </authorList>
    </citation>
    <scope>FUNCTION</scope>
    <scope>DISRUPTION PHENOTYPE</scope>
</reference>
<protein>
    <recommendedName>
        <fullName>TBC1 domain family member 12</fullName>
    </recommendedName>
</protein>